<sequence>MNHEKTNDGNNRPSYKESLNLLKTSFSMRANAIVREPELQQFWKEKGIDFELGLANKGSTFTLHDGPPYANGNLHMGHALNKILKDIINKYQILKGSKVRFVPGWDCHGLPIELQVLKTLDRKEREDLTPIKLRKKAAAYAHKQIALQKDGFRRWGIWADWDNPYLTLQKEYEAAQIKLFGEMAFKGYIYRGLKPVHWSPSSRTALAEAELEYPEGHTSPSIYVAFSVVKLPNLLQESLSKQGLALPVHEDGLSNKLKVAIWTTTPWTLPANMAVAVNENIDYIIAKDNSEKLLIIASDLREIVSEEIGSPLEKVAIVKGKMLDGVLYKHPLFDSLNPFVLGGNYITTESGTGIVHTAPGHGVDDFNTGMKYKLPIICPVDEKGFFTSEAGDFEGLNVLKDANTKIINALKESGCLLKEKPYIHKYPYDWRTKKPTIFRATEQWFASVEGFRNDALNSIEKVEWLPQSGKKRIKSMVEDRGDWCISRQRNWGVPIPVFYSKEGSKVLLNEATIKHIYNLFVKYGADAWWELPISELLPSNYSSEAHKWEKGKDTMDVWFDSGSSWTSVISKSDELNYPADLYLEGSDQHRGWFQSSLLTSVAVNSHAPYLKVLTHGFALDENGRKMSKSLGNIIDPWKIINGGNNKKLEPAYGADVLRLWVSSVDYSVDVPIGNNILSQLSDVYRKVRNTARYLLGNLHDFDPAKDGLDIGDLPILDRWMLNRTADVVDEISIAFERYEFSKFFQLLQSFCVVDLSNFYLDIAKDRLYVSAPNDFRRRSCQYVLSLIVERLAGVISPVLSHTAEDIWQNIPYKLNEESVFQRYWPKVPDSWRDSSFNKPINQIRELRTSVNRALEDCRTRQELGSSLEASVRISPINESLQNSLTFLQENGHNSVDNLFDWLIVSKVQIGGEPWAEVLFTKEDDIGVIEIAKSRGAKCERCWHYELDIGQYERHPLLCGRCVDIIERID</sequence>
<protein>
    <recommendedName>
        <fullName evidence="1">Isoleucine--tRNA ligase</fullName>
        <ecNumber evidence="1">6.1.1.5</ecNumber>
    </recommendedName>
    <alternativeName>
        <fullName evidence="1">Isoleucyl-tRNA synthetase</fullName>
        <shortName evidence="1">IleRS</shortName>
    </alternativeName>
</protein>
<comment type="function">
    <text evidence="1">Catalyzes the attachment of isoleucine to tRNA(Ile). As IleRS can inadvertently accommodate and process structurally similar amino acids such as valine, to avoid such errors it has two additional distinct tRNA(Ile)-dependent editing activities. One activity is designated as 'pretransfer' editing and involves the hydrolysis of activated Val-AMP. The other activity is designated 'posttransfer' editing and involves deacylation of mischarged Val-tRNA(Ile).</text>
</comment>
<comment type="catalytic activity">
    <reaction evidence="1">
        <text>tRNA(Ile) + L-isoleucine + ATP = L-isoleucyl-tRNA(Ile) + AMP + diphosphate</text>
        <dbReference type="Rhea" id="RHEA:11060"/>
        <dbReference type="Rhea" id="RHEA-COMP:9666"/>
        <dbReference type="Rhea" id="RHEA-COMP:9695"/>
        <dbReference type="ChEBI" id="CHEBI:30616"/>
        <dbReference type="ChEBI" id="CHEBI:33019"/>
        <dbReference type="ChEBI" id="CHEBI:58045"/>
        <dbReference type="ChEBI" id="CHEBI:78442"/>
        <dbReference type="ChEBI" id="CHEBI:78528"/>
        <dbReference type="ChEBI" id="CHEBI:456215"/>
        <dbReference type="EC" id="6.1.1.5"/>
    </reaction>
</comment>
<comment type="cofactor">
    <cofactor evidence="1">
        <name>Zn(2+)</name>
        <dbReference type="ChEBI" id="CHEBI:29105"/>
    </cofactor>
    <text evidence="1">Binds 1 zinc ion per subunit.</text>
</comment>
<comment type="subunit">
    <text evidence="1">Monomer.</text>
</comment>
<comment type="subcellular location">
    <subcellularLocation>
        <location evidence="1">Cytoplasm</location>
    </subcellularLocation>
</comment>
<comment type="domain">
    <text evidence="1">IleRS has two distinct active sites: one for aminoacylation and one for editing. The misactivated valine is translocated from the active site to the editing site, which sterically excludes the correctly activated isoleucine. The single editing site contains two valyl binding pockets, one specific for each substrate (Val-AMP or Val-tRNA(Ile)).</text>
</comment>
<comment type="similarity">
    <text evidence="1">Belongs to the class-I aminoacyl-tRNA synthetase family. IleS type 1 subfamily.</text>
</comment>
<gene>
    <name evidence="1" type="primary">ileS</name>
    <name type="ordered locus">Pro_0268</name>
</gene>
<reference key="1">
    <citation type="journal article" date="2003" name="Proc. Natl. Acad. Sci. U.S.A.">
        <title>Genome sequence of the cyanobacterium Prochlorococcus marinus SS120, a nearly minimal oxyphototrophic genome.</title>
        <authorList>
            <person name="Dufresne A."/>
            <person name="Salanoubat M."/>
            <person name="Partensky F."/>
            <person name="Artiguenave F."/>
            <person name="Axmann I.M."/>
            <person name="Barbe V."/>
            <person name="Duprat S."/>
            <person name="Galperin M.Y."/>
            <person name="Koonin E.V."/>
            <person name="Le Gall F."/>
            <person name="Makarova K.S."/>
            <person name="Ostrowski M."/>
            <person name="Oztas S."/>
            <person name="Robert C."/>
            <person name="Rogozin I.B."/>
            <person name="Scanlan D.J."/>
            <person name="Tandeau de Marsac N."/>
            <person name="Weissenbach J."/>
            <person name="Wincker P."/>
            <person name="Wolf Y.I."/>
            <person name="Hess W.R."/>
        </authorList>
    </citation>
    <scope>NUCLEOTIDE SEQUENCE [LARGE SCALE GENOMIC DNA]</scope>
    <source>
        <strain>SARG / CCMP1375 / SS120</strain>
    </source>
</reference>
<feature type="chain" id="PRO_0000098439" description="Isoleucine--tRNA ligase">
    <location>
        <begin position="1"/>
        <end position="969"/>
    </location>
</feature>
<feature type="short sequence motif" description="'HIGH' region">
    <location>
        <begin position="68"/>
        <end position="78"/>
    </location>
</feature>
<feature type="short sequence motif" description="'KMSKS' region">
    <location>
        <begin position="625"/>
        <end position="629"/>
    </location>
</feature>
<feature type="binding site" evidence="1">
    <location>
        <position position="584"/>
    </location>
    <ligand>
        <name>L-isoleucyl-5'-AMP</name>
        <dbReference type="ChEBI" id="CHEBI:178002"/>
    </ligand>
</feature>
<feature type="binding site" evidence="1">
    <location>
        <position position="628"/>
    </location>
    <ligand>
        <name>ATP</name>
        <dbReference type="ChEBI" id="CHEBI:30616"/>
    </ligand>
</feature>
<feature type="binding site" evidence="1">
    <location>
        <position position="938"/>
    </location>
    <ligand>
        <name>Zn(2+)</name>
        <dbReference type="ChEBI" id="CHEBI:29105"/>
    </ligand>
</feature>
<feature type="binding site" evidence="1">
    <location>
        <position position="941"/>
    </location>
    <ligand>
        <name>Zn(2+)</name>
        <dbReference type="ChEBI" id="CHEBI:29105"/>
    </ligand>
</feature>
<feature type="binding site" evidence="1">
    <location>
        <position position="958"/>
    </location>
    <ligand>
        <name>Zn(2+)</name>
        <dbReference type="ChEBI" id="CHEBI:29105"/>
    </ligand>
</feature>
<feature type="binding site" evidence="1">
    <location>
        <position position="961"/>
    </location>
    <ligand>
        <name>Zn(2+)</name>
        <dbReference type="ChEBI" id="CHEBI:29105"/>
    </ligand>
</feature>
<evidence type="ECO:0000255" key="1">
    <source>
        <dbReference type="HAMAP-Rule" id="MF_02002"/>
    </source>
</evidence>
<name>SYI_PROMA</name>
<dbReference type="EC" id="6.1.1.5" evidence="1"/>
<dbReference type="EMBL" id="AE017126">
    <property type="protein sequence ID" value="AAP99314.1"/>
    <property type="molecule type" value="Genomic_DNA"/>
</dbReference>
<dbReference type="RefSeq" id="NP_874662.1">
    <property type="nucleotide sequence ID" value="NC_005042.1"/>
</dbReference>
<dbReference type="RefSeq" id="WP_011124423.1">
    <property type="nucleotide sequence ID" value="NC_005042.1"/>
</dbReference>
<dbReference type="SMR" id="Q7VDV0"/>
<dbReference type="STRING" id="167539.Pro_0268"/>
<dbReference type="EnsemblBacteria" id="AAP99314">
    <property type="protein sequence ID" value="AAP99314"/>
    <property type="gene ID" value="Pro_0268"/>
</dbReference>
<dbReference type="KEGG" id="pma:Pro_0268"/>
<dbReference type="PATRIC" id="fig|167539.5.peg.276"/>
<dbReference type="eggNOG" id="COG0060">
    <property type="taxonomic scope" value="Bacteria"/>
</dbReference>
<dbReference type="HOGENOM" id="CLU_001493_7_0_3"/>
<dbReference type="OrthoDB" id="9810365at2"/>
<dbReference type="Proteomes" id="UP000001420">
    <property type="component" value="Chromosome"/>
</dbReference>
<dbReference type="GO" id="GO:0005737">
    <property type="term" value="C:cytoplasm"/>
    <property type="evidence" value="ECO:0007669"/>
    <property type="project" value="UniProtKB-SubCell"/>
</dbReference>
<dbReference type="GO" id="GO:0002161">
    <property type="term" value="F:aminoacyl-tRNA deacylase activity"/>
    <property type="evidence" value="ECO:0007669"/>
    <property type="project" value="InterPro"/>
</dbReference>
<dbReference type="GO" id="GO:0005524">
    <property type="term" value="F:ATP binding"/>
    <property type="evidence" value="ECO:0007669"/>
    <property type="project" value="UniProtKB-UniRule"/>
</dbReference>
<dbReference type="GO" id="GO:0004822">
    <property type="term" value="F:isoleucine-tRNA ligase activity"/>
    <property type="evidence" value="ECO:0007669"/>
    <property type="project" value="UniProtKB-UniRule"/>
</dbReference>
<dbReference type="GO" id="GO:0000049">
    <property type="term" value="F:tRNA binding"/>
    <property type="evidence" value="ECO:0007669"/>
    <property type="project" value="InterPro"/>
</dbReference>
<dbReference type="GO" id="GO:0008270">
    <property type="term" value="F:zinc ion binding"/>
    <property type="evidence" value="ECO:0007669"/>
    <property type="project" value="UniProtKB-UniRule"/>
</dbReference>
<dbReference type="GO" id="GO:0006428">
    <property type="term" value="P:isoleucyl-tRNA aminoacylation"/>
    <property type="evidence" value="ECO:0007669"/>
    <property type="project" value="UniProtKB-UniRule"/>
</dbReference>
<dbReference type="CDD" id="cd07960">
    <property type="entry name" value="Anticodon_Ia_Ile_BEm"/>
    <property type="match status" value="1"/>
</dbReference>
<dbReference type="CDD" id="cd00818">
    <property type="entry name" value="IleRS_core"/>
    <property type="match status" value="1"/>
</dbReference>
<dbReference type="FunFam" id="1.10.730.20:FF:000001">
    <property type="entry name" value="Isoleucine--tRNA ligase"/>
    <property type="match status" value="1"/>
</dbReference>
<dbReference type="FunFam" id="3.40.50.620:FF:000111">
    <property type="entry name" value="Mitochondrial isoleucyl-tRNA synthetase"/>
    <property type="match status" value="1"/>
</dbReference>
<dbReference type="Gene3D" id="1.10.730.20">
    <property type="match status" value="1"/>
</dbReference>
<dbReference type="Gene3D" id="3.40.50.620">
    <property type="entry name" value="HUPs"/>
    <property type="match status" value="2"/>
</dbReference>
<dbReference type="Gene3D" id="1.10.10.830">
    <property type="entry name" value="Ile-tRNA synthetase CP2 domain-like"/>
    <property type="match status" value="1"/>
</dbReference>
<dbReference type="Gene3D" id="3.90.740.10">
    <property type="entry name" value="Valyl/Leucyl/Isoleucyl-tRNA synthetase, editing domain"/>
    <property type="match status" value="1"/>
</dbReference>
<dbReference type="HAMAP" id="MF_02002">
    <property type="entry name" value="Ile_tRNA_synth_type1"/>
    <property type="match status" value="1"/>
</dbReference>
<dbReference type="InterPro" id="IPR001412">
    <property type="entry name" value="aa-tRNA-synth_I_CS"/>
</dbReference>
<dbReference type="InterPro" id="IPR002300">
    <property type="entry name" value="aa-tRNA-synth_Ia"/>
</dbReference>
<dbReference type="InterPro" id="IPR033708">
    <property type="entry name" value="Anticodon_Ile_BEm"/>
</dbReference>
<dbReference type="InterPro" id="IPR002301">
    <property type="entry name" value="Ile-tRNA-ligase"/>
</dbReference>
<dbReference type="InterPro" id="IPR023585">
    <property type="entry name" value="Ile-tRNA-ligase_type1"/>
</dbReference>
<dbReference type="InterPro" id="IPR050081">
    <property type="entry name" value="Ile-tRNA_ligase"/>
</dbReference>
<dbReference type="InterPro" id="IPR013155">
    <property type="entry name" value="M/V/L/I-tRNA-synth_anticd-bd"/>
</dbReference>
<dbReference type="InterPro" id="IPR014729">
    <property type="entry name" value="Rossmann-like_a/b/a_fold"/>
</dbReference>
<dbReference type="InterPro" id="IPR009080">
    <property type="entry name" value="tRNAsynth_Ia_anticodon-bd"/>
</dbReference>
<dbReference type="InterPro" id="IPR009008">
    <property type="entry name" value="Val/Leu/Ile-tRNA-synth_edit"/>
</dbReference>
<dbReference type="InterPro" id="IPR010663">
    <property type="entry name" value="Znf_FPG/IleRS"/>
</dbReference>
<dbReference type="NCBIfam" id="TIGR00392">
    <property type="entry name" value="ileS"/>
    <property type="match status" value="1"/>
</dbReference>
<dbReference type="PANTHER" id="PTHR42765:SF1">
    <property type="entry name" value="ISOLEUCINE--TRNA LIGASE, MITOCHONDRIAL"/>
    <property type="match status" value="1"/>
</dbReference>
<dbReference type="PANTHER" id="PTHR42765">
    <property type="entry name" value="SOLEUCYL-TRNA SYNTHETASE"/>
    <property type="match status" value="1"/>
</dbReference>
<dbReference type="Pfam" id="PF08264">
    <property type="entry name" value="Anticodon_1"/>
    <property type="match status" value="1"/>
</dbReference>
<dbReference type="Pfam" id="PF00133">
    <property type="entry name" value="tRNA-synt_1"/>
    <property type="match status" value="1"/>
</dbReference>
<dbReference type="Pfam" id="PF06827">
    <property type="entry name" value="zf-FPG_IleRS"/>
    <property type="match status" value="1"/>
</dbReference>
<dbReference type="PRINTS" id="PR00984">
    <property type="entry name" value="TRNASYNTHILE"/>
</dbReference>
<dbReference type="SUPFAM" id="SSF47323">
    <property type="entry name" value="Anticodon-binding domain of a subclass of class I aminoacyl-tRNA synthetases"/>
    <property type="match status" value="1"/>
</dbReference>
<dbReference type="SUPFAM" id="SSF52374">
    <property type="entry name" value="Nucleotidylyl transferase"/>
    <property type="match status" value="1"/>
</dbReference>
<dbReference type="SUPFAM" id="SSF50677">
    <property type="entry name" value="ValRS/IleRS/LeuRS editing domain"/>
    <property type="match status" value="1"/>
</dbReference>
<dbReference type="PROSITE" id="PS00178">
    <property type="entry name" value="AA_TRNA_LIGASE_I"/>
    <property type="match status" value="1"/>
</dbReference>
<keyword id="KW-0030">Aminoacyl-tRNA synthetase</keyword>
<keyword id="KW-0067">ATP-binding</keyword>
<keyword id="KW-0963">Cytoplasm</keyword>
<keyword id="KW-0436">Ligase</keyword>
<keyword id="KW-0479">Metal-binding</keyword>
<keyword id="KW-0547">Nucleotide-binding</keyword>
<keyword id="KW-0648">Protein biosynthesis</keyword>
<keyword id="KW-1185">Reference proteome</keyword>
<keyword id="KW-0862">Zinc</keyword>
<proteinExistence type="inferred from homology"/>
<organism>
    <name type="scientific">Prochlorococcus marinus (strain SARG / CCMP1375 / SS120)</name>
    <dbReference type="NCBI Taxonomy" id="167539"/>
    <lineage>
        <taxon>Bacteria</taxon>
        <taxon>Bacillati</taxon>
        <taxon>Cyanobacteriota</taxon>
        <taxon>Cyanophyceae</taxon>
        <taxon>Synechococcales</taxon>
        <taxon>Prochlorococcaceae</taxon>
        <taxon>Prochlorococcus</taxon>
    </lineage>
</organism>
<accession>Q7VDV0</accession>